<keyword id="KW-0963">Cytoplasm</keyword>
<keyword id="KW-0251">Elongation factor</keyword>
<keyword id="KW-0648">Protein biosynthesis</keyword>
<keyword id="KW-1185">Reference proteome</keyword>
<feature type="chain" id="PRO_0000161177" description="Elongation factor Ts">
    <location>
        <begin position="1"/>
        <end position="287"/>
    </location>
</feature>
<feature type="region of interest" description="Involved in Mg(2+) ion dislocation from EF-Tu" evidence="1">
    <location>
        <begin position="80"/>
        <end position="83"/>
    </location>
</feature>
<proteinExistence type="inferred from homology"/>
<organism>
    <name type="scientific">Pseudomonas putida (strain ATCC 47054 / DSM 6125 / CFBP 8728 / NCIMB 11950 / KT2440)</name>
    <dbReference type="NCBI Taxonomy" id="160488"/>
    <lineage>
        <taxon>Bacteria</taxon>
        <taxon>Pseudomonadati</taxon>
        <taxon>Pseudomonadota</taxon>
        <taxon>Gammaproteobacteria</taxon>
        <taxon>Pseudomonadales</taxon>
        <taxon>Pseudomonadaceae</taxon>
        <taxon>Pseudomonas</taxon>
    </lineage>
</organism>
<protein>
    <recommendedName>
        <fullName evidence="1">Elongation factor Ts</fullName>
        <shortName evidence="1">EF-Ts</shortName>
    </recommendedName>
</protein>
<comment type="function">
    <text evidence="1">Associates with the EF-Tu.GDP complex and induces the exchange of GDP to GTP. It remains bound to the aminoacyl-tRNA.EF-Tu.GTP complex up to the GTP hydrolysis stage on the ribosome.</text>
</comment>
<comment type="subcellular location">
    <subcellularLocation>
        <location evidence="1">Cytoplasm</location>
    </subcellularLocation>
</comment>
<comment type="similarity">
    <text evidence="1">Belongs to the EF-Ts family.</text>
</comment>
<sequence>MAAITAALVKELRERTGEGMMDCKKALEKAGGDIEKAIDDMRASGAIKAAKKAGNVAAEGAIAVKTDGTSAVLLEVNSQTDFLALQDDFKNFVAESLEEAFAQKLTDAAPLIASREAAREALVAKCGENVNIRRLVRVEGDVVGAYLHGNKIGAVVVLKGGDVELAKNIAMHVAASNPEFLDSSEISAEAIEREKNVFLQLNADKIAGKPENIVENMINGRITKFKAEASLKEQAFVMNPEIKVGELAKKAGAEIVSFTYFKVGEGIEKPVDDFAAEVAAQVAAAKQ</sequence>
<name>EFTS_PSEPK</name>
<reference key="1">
    <citation type="journal article" date="2002" name="Environ. Microbiol.">
        <title>Complete genome sequence and comparative analysis of the metabolically versatile Pseudomonas putida KT2440.</title>
        <authorList>
            <person name="Nelson K.E."/>
            <person name="Weinel C."/>
            <person name="Paulsen I.T."/>
            <person name="Dodson R.J."/>
            <person name="Hilbert H."/>
            <person name="Martins dos Santos V.A.P."/>
            <person name="Fouts D.E."/>
            <person name="Gill S.R."/>
            <person name="Pop M."/>
            <person name="Holmes M."/>
            <person name="Brinkac L.M."/>
            <person name="Beanan M.J."/>
            <person name="DeBoy R.T."/>
            <person name="Daugherty S.C."/>
            <person name="Kolonay J.F."/>
            <person name="Madupu R."/>
            <person name="Nelson W.C."/>
            <person name="White O."/>
            <person name="Peterson J.D."/>
            <person name="Khouri H.M."/>
            <person name="Hance I."/>
            <person name="Chris Lee P."/>
            <person name="Holtzapple E.K."/>
            <person name="Scanlan D."/>
            <person name="Tran K."/>
            <person name="Moazzez A."/>
            <person name="Utterback T.R."/>
            <person name="Rizzo M."/>
            <person name="Lee K."/>
            <person name="Kosack D."/>
            <person name="Moestl D."/>
            <person name="Wedler H."/>
            <person name="Lauber J."/>
            <person name="Stjepandic D."/>
            <person name="Hoheisel J."/>
            <person name="Straetz M."/>
            <person name="Heim S."/>
            <person name="Kiewitz C."/>
            <person name="Eisen J.A."/>
            <person name="Timmis K.N."/>
            <person name="Duesterhoeft A."/>
            <person name="Tuemmler B."/>
            <person name="Fraser C.M."/>
        </authorList>
    </citation>
    <scope>NUCLEOTIDE SEQUENCE [LARGE SCALE GENOMIC DNA]</scope>
    <source>
        <strain>ATCC 47054 / DSM 6125 / CFBP 8728 / NCIMB 11950 / KT2440</strain>
    </source>
</reference>
<evidence type="ECO:0000255" key="1">
    <source>
        <dbReference type="HAMAP-Rule" id="MF_00050"/>
    </source>
</evidence>
<accession>Q88MH9</accession>
<gene>
    <name evidence="1" type="primary">tsf</name>
    <name type="ordered locus">PP_1592</name>
</gene>
<dbReference type="EMBL" id="AE015451">
    <property type="protein sequence ID" value="AAN67213.1"/>
    <property type="molecule type" value="Genomic_DNA"/>
</dbReference>
<dbReference type="RefSeq" id="NP_743749.1">
    <property type="nucleotide sequence ID" value="NC_002947.4"/>
</dbReference>
<dbReference type="RefSeq" id="WP_010952674.1">
    <property type="nucleotide sequence ID" value="NZ_CP169744.1"/>
</dbReference>
<dbReference type="SMR" id="Q88MH9"/>
<dbReference type="STRING" id="160488.PP_1592"/>
<dbReference type="PaxDb" id="160488-PP_1592"/>
<dbReference type="GeneID" id="83681928"/>
<dbReference type="KEGG" id="ppu:PP_1592"/>
<dbReference type="PATRIC" id="fig|160488.4.peg.1683"/>
<dbReference type="eggNOG" id="COG0264">
    <property type="taxonomic scope" value="Bacteria"/>
</dbReference>
<dbReference type="HOGENOM" id="CLU_047155_0_2_6"/>
<dbReference type="OrthoDB" id="9808348at2"/>
<dbReference type="PhylomeDB" id="Q88MH9"/>
<dbReference type="BioCyc" id="PPUT160488:G1G01-1689-MONOMER"/>
<dbReference type="Proteomes" id="UP000000556">
    <property type="component" value="Chromosome"/>
</dbReference>
<dbReference type="GO" id="GO:0005737">
    <property type="term" value="C:cytoplasm"/>
    <property type="evidence" value="ECO:0007669"/>
    <property type="project" value="UniProtKB-SubCell"/>
</dbReference>
<dbReference type="GO" id="GO:0003746">
    <property type="term" value="F:translation elongation factor activity"/>
    <property type="evidence" value="ECO:0007669"/>
    <property type="project" value="UniProtKB-UniRule"/>
</dbReference>
<dbReference type="CDD" id="cd14275">
    <property type="entry name" value="UBA_EF-Ts"/>
    <property type="match status" value="1"/>
</dbReference>
<dbReference type="FunFam" id="1.10.286.20:FF:000001">
    <property type="entry name" value="Elongation factor Ts"/>
    <property type="match status" value="1"/>
</dbReference>
<dbReference type="FunFam" id="1.10.8.10:FF:000001">
    <property type="entry name" value="Elongation factor Ts"/>
    <property type="match status" value="1"/>
</dbReference>
<dbReference type="Gene3D" id="1.10.286.20">
    <property type="match status" value="1"/>
</dbReference>
<dbReference type="Gene3D" id="1.10.8.10">
    <property type="entry name" value="DNA helicase RuvA subunit, C-terminal domain"/>
    <property type="match status" value="1"/>
</dbReference>
<dbReference type="Gene3D" id="3.30.479.20">
    <property type="entry name" value="Elongation factor Ts, dimerisation domain"/>
    <property type="match status" value="2"/>
</dbReference>
<dbReference type="HAMAP" id="MF_00050">
    <property type="entry name" value="EF_Ts"/>
    <property type="match status" value="1"/>
</dbReference>
<dbReference type="InterPro" id="IPR036402">
    <property type="entry name" value="EF-Ts_dimer_sf"/>
</dbReference>
<dbReference type="InterPro" id="IPR001816">
    <property type="entry name" value="Transl_elong_EFTs/EF1B"/>
</dbReference>
<dbReference type="InterPro" id="IPR014039">
    <property type="entry name" value="Transl_elong_EFTs/EF1B_dimer"/>
</dbReference>
<dbReference type="InterPro" id="IPR018101">
    <property type="entry name" value="Transl_elong_Ts_CS"/>
</dbReference>
<dbReference type="InterPro" id="IPR009060">
    <property type="entry name" value="UBA-like_sf"/>
</dbReference>
<dbReference type="NCBIfam" id="TIGR00116">
    <property type="entry name" value="tsf"/>
    <property type="match status" value="1"/>
</dbReference>
<dbReference type="PANTHER" id="PTHR11741">
    <property type="entry name" value="ELONGATION FACTOR TS"/>
    <property type="match status" value="1"/>
</dbReference>
<dbReference type="PANTHER" id="PTHR11741:SF0">
    <property type="entry name" value="ELONGATION FACTOR TS, MITOCHONDRIAL"/>
    <property type="match status" value="1"/>
</dbReference>
<dbReference type="Pfam" id="PF00889">
    <property type="entry name" value="EF_TS"/>
    <property type="match status" value="1"/>
</dbReference>
<dbReference type="SUPFAM" id="SSF54713">
    <property type="entry name" value="Elongation factor Ts (EF-Ts), dimerisation domain"/>
    <property type="match status" value="2"/>
</dbReference>
<dbReference type="SUPFAM" id="SSF46934">
    <property type="entry name" value="UBA-like"/>
    <property type="match status" value="1"/>
</dbReference>
<dbReference type="PROSITE" id="PS01126">
    <property type="entry name" value="EF_TS_1"/>
    <property type="match status" value="1"/>
</dbReference>
<dbReference type="PROSITE" id="PS01127">
    <property type="entry name" value="EF_TS_2"/>
    <property type="match status" value="1"/>
</dbReference>